<proteinExistence type="inferred from homology"/>
<gene>
    <name evidence="1" type="primary">accA</name>
    <name type="ordered locus">RPA0508</name>
</gene>
<name>ACCA_RHOPA</name>
<comment type="function">
    <text evidence="1">Component of the acetyl coenzyme A carboxylase (ACC) complex. First, biotin carboxylase catalyzes the carboxylation of biotin on its carrier protein (BCCP) and then the CO(2) group is transferred by the carboxyltransferase to acetyl-CoA to form malonyl-CoA.</text>
</comment>
<comment type="catalytic activity">
    <reaction evidence="1">
        <text>N(6)-carboxybiotinyl-L-lysyl-[protein] + acetyl-CoA = N(6)-biotinyl-L-lysyl-[protein] + malonyl-CoA</text>
        <dbReference type="Rhea" id="RHEA:54728"/>
        <dbReference type="Rhea" id="RHEA-COMP:10505"/>
        <dbReference type="Rhea" id="RHEA-COMP:10506"/>
        <dbReference type="ChEBI" id="CHEBI:57288"/>
        <dbReference type="ChEBI" id="CHEBI:57384"/>
        <dbReference type="ChEBI" id="CHEBI:83144"/>
        <dbReference type="ChEBI" id="CHEBI:83145"/>
        <dbReference type="EC" id="2.1.3.15"/>
    </reaction>
</comment>
<comment type="pathway">
    <text evidence="1">Lipid metabolism; malonyl-CoA biosynthesis; malonyl-CoA from acetyl-CoA: step 1/1.</text>
</comment>
<comment type="subunit">
    <text evidence="1">Acetyl-CoA carboxylase is a heterohexamer composed of biotin carboxyl carrier protein (AccB), biotin carboxylase (AccC) and two subunits each of ACCase subunit alpha (AccA) and ACCase subunit beta (AccD).</text>
</comment>
<comment type="subcellular location">
    <subcellularLocation>
        <location evidence="1">Cytoplasm</location>
    </subcellularLocation>
</comment>
<comment type="similarity">
    <text evidence="1">Belongs to the AccA family.</text>
</comment>
<feature type="chain" id="PRO_0000223819" description="Acetyl-coenzyme A carboxylase carboxyl transferase subunit alpha">
    <location>
        <begin position="1"/>
        <end position="320"/>
    </location>
</feature>
<feature type="domain" description="CoA carboxyltransferase C-terminal" evidence="2">
    <location>
        <begin position="41"/>
        <end position="295"/>
    </location>
</feature>
<organism>
    <name type="scientific">Rhodopseudomonas palustris (strain ATCC BAA-98 / CGA009)</name>
    <dbReference type="NCBI Taxonomy" id="258594"/>
    <lineage>
        <taxon>Bacteria</taxon>
        <taxon>Pseudomonadati</taxon>
        <taxon>Pseudomonadota</taxon>
        <taxon>Alphaproteobacteria</taxon>
        <taxon>Hyphomicrobiales</taxon>
        <taxon>Nitrobacteraceae</taxon>
        <taxon>Rhodopseudomonas</taxon>
    </lineage>
</organism>
<evidence type="ECO:0000255" key="1">
    <source>
        <dbReference type="HAMAP-Rule" id="MF_00823"/>
    </source>
</evidence>
<evidence type="ECO:0000255" key="2">
    <source>
        <dbReference type="PROSITE-ProRule" id="PRU01137"/>
    </source>
</evidence>
<reference key="1">
    <citation type="journal article" date="2004" name="Nat. Biotechnol.">
        <title>Complete genome sequence of the metabolically versatile photosynthetic bacterium Rhodopseudomonas palustris.</title>
        <authorList>
            <person name="Larimer F.W."/>
            <person name="Chain P."/>
            <person name="Hauser L."/>
            <person name="Lamerdin J.E."/>
            <person name="Malfatti S."/>
            <person name="Do L."/>
            <person name="Land M.L."/>
            <person name="Pelletier D.A."/>
            <person name="Beatty J.T."/>
            <person name="Lang A.S."/>
            <person name="Tabita F.R."/>
            <person name="Gibson J.L."/>
            <person name="Hanson T.E."/>
            <person name="Bobst C."/>
            <person name="Torres y Torres J.L."/>
            <person name="Peres C."/>
            <person name="Harrison F.H."/>
            <person name="Gibson J."/>
            <person name="Harwood C.S."/>
        </authorList>
    </citation>
    <scope>NUCLEOTIDE SEQUENCE [LARGE SCALE GENOMIC DNA]</scope>
    <source>
        <strain>ATCC BAA-98 / CGA009</strain>
    </source>
</reference>
<protein>
    <recommendedName>
        <fullName evidence="1">Acetyl-coenzyme A carboxylase carboxyl transferase subunit alpha</fullName>
        <shortName evidence="1">ACCase subunit alpha</shortName>
        <shortName evidence="1">Acetyl-CoA carboxylase carboxyltransferase subunit alpha</shortName>
        <ecNumber evidence="1">2.1.3.15</ecNumber>
    </recommendedName>
</protein>
<dbReference type="EC" id="2.1.3.15" evidence="1"/>
<dbReference type="EMBL" id="BX572594">
    <property type="protein sequence ID" value="CAE25952.1"/>
    <property type="molecule type" value="Genomic_DNA"/>
</dbReference>
<dbReference type="RefSeq" id="WP_011156076.1">
    <property type="nucleotide sequence ID" value="NZ_CP116810.1"/>
</dbReference>
<dbReference type="SMR" id="Q6NCG4"/>
<dbReference type="STRING" id="258594.RPA0508"/>
<dbReference type="GeneID" id="66891526"/>
<dbReference type="eggNOG" id="COG0825">
    <property type="taxonomic scope" value="Bacteria"/>
</dbReference>
<dbReference type="HOGENOM" id="CLU_015486_0_2_5"/>
<dbReference type="PhylomeDB" id="Q6NCG4"/>
<dbReference type="UniPathway" id="UPA00655">
    <property type="reaction ID" value="UER00711"/>
</dbReference>
<dbReference type="GO" id="GO:0009317">
    <property type="term" value="C:acetyl-CoA carboxylase complex"/>
    <property type="evidence" value="ECO:0007669"/>
    <property type="project" value="InterPro"/>
</dbReference>
<dbReference type="GO" id="GO:0003989">
    <property type="term" value="F:acetyl-CoA carboxylase activity"/>
    <property type="evidence" value="ECO:0007669"/>
    <property type="project" value="InterPro"/>
</dbReference>
<dbReference type="GO" id="GO:0005524">
    <property type="term" value="F:ATP binding"/>
    <property type="evidence" value="ECO:0007669"/>
    <property type="project" value="UniProtKB-KW"/>
</dbReference>
<dbReference type="GO" id="GO:0016743">
    <property type="term" value="F:carboxyl- or carbamoyltransferase activity"/>
    <property type="evidence" value="ECO:0007669"/>
    <property type="project" value="UniProtKB-UniRule"/>
</dbReference>
<dbReference type="GO" id="GO:0006633">
    <property type="term" value="P:fatty acid biosynthetic process"/>
    <property type="evidence" value="ECO:0007669"/>
    <property type="project" value="UniProtKB-KW"/>
</dbReference>
<dbReference type="GO" id="GO:2001295">
    <property type="term" value="P:malonyl-CoA biosynthetic process"/>
    <property type="evidence" value="ECO:0007669"/>
    <property type="project" value="UniProtKB-UniRule"/>
</dbReference>
<dbReference type="Gene3D" id="3.90.226.10">
    <property type="entry name" value="2-enoyl-CoA Hydratase, Chain A, domain 1"/>
    <property type="match status" value="1"/>
</dbReference>
<dbReference type="HAMAP" id="MF_00823">
    <property type="entry name" value="AcetylCoA_CT_alpha"/>
    <property type="match status" value="1"/>
</dbReference>
<dbReference type="InterPro" id="IPR001095">
    <property type="entry name" value="Acetyl_CoA_COase_a_su"/>
</dbReference>
<dbReference type="InterPro" id="IPR029045">
    <property type="entry name" value="ClpP/crotonase-like_dom_sf"/>
</dbReference>
<dbReference type="InterPro" id="IPR011763">
    <property type="entry name" value="COA_CT_C"/>
</dbReference>
<dbReference type="NCBIfam" id="TIGR00513">
    <property type="entry name" value="accA"/>
    <property type="match status" value="1"/>
</dbReference>
<dbReference type="NCBIfam" id="NF041504">
    <property type="entry name" value="AccA_sub"/>
    <property type="match status" value="1"/>
</dbReference>
<dbReference type="NCBIfam" id="NF004344">
    <property type="entry name" value="PRK05724.1"/>
    <property type="match status" value="1"/>
</dbReference>
<dbReference type="PANTHER" id="PTHR42853">
    <property type="entry name" value="ACETYL-COENZYME A CARBOXYLASE CARBOXYL TRANSFERASE SUBUNIT ALPHA"/>
    <property type="match status" value="1"/>
</dbReference>
<dbReference type="PANTHER" id="PTHR42853:SF3">
    <property type="entry name" value="ACETYL-COENZYME A CARBOXYLASE CARBOXYL TRANSFERASE SUBUNIT ALPHA, CHLOROPLASTIC"/>
    <property type="match status" value="1"/>
</dbReference>
<dbReference type="Pfam" id="PF03255">
    <property type="entry name" value="ACCA"/>
    <property type="match status" value="1"/>
</dbReference>
<dbReference type="PRINTS" id="PR01069">
    <property type="entry name" value="ACCCTRFRASEA"/>
</dbReference>
<dbReference type="SUPFAM" id="SSF52096">
    <property type="entry name" value="ClpP/crotonase"/>
    <property type="match status" value="1"/>
</dbReference>
<dbReference type="PROSITE" id="PS50989">
    <property type="entry name" value="COA_CT_CTER"/>
    <property type="match status" value="1"/>
</dbReference>
<accession>Q6NCG4</accession>
<keyword id="KW-0067">ATP-binding</keyword>
<keyword id="KW-0963">Cytoplasm</keyword>
<keyword id="KW-0275">Fatty acid biosynthesis</keyword>
<keyword id="KW-0276">Fatty acid metabolism</keyword>
<keyword id="KW-0444">Lipid biosynthesis</keyword>
<keyword id="KW-0443">Lipid metabolism</keyword>
<keyword id="KW-0547">Nucleotide-binding</keyword>
<keyword id="KW-0808">Transferase</keyword>
<sequence length="320" mass="34470">MSGPMRSYLDFEKPVAELDSKIDELRTLAASGSDIHEEIEKIEEKAQQALQDLYAALTPWQKTQVARHPQRPHCVDYIEGLIAEFTPLAGDRKFGDDEALVGGFGRFRGEAVCVIGQEKGSTTETRLRHNFGMARPEGYRKAVRLMEMADRFDLPVLSLVDTAGAYPGIGAEERGQAEAIARSTDACLQLGVPNVALVIGEGGSGGAIAIATANKVLMLEHAVYSVISPEAASSILWRDGTKAQEAANSMKITAQDLLKFGVIDQILAEPKGGAHRDPEAMIATAGDAIAAAFAELKGQGRDAIRAKRRQKFLDIGRKLA</sequence>